<sequence>MATRRQPLIPGWLIPGLCAAALMITVSLAAFLALWLNAPSGAWSTIWRDSYLWHVVRFSFWQAFLSAVLSVVPAVFLARALYRRRFPGRLALLRLCAMTLILPVLVAVFGILSVYGRQGWLASLWQMLGLQWTFSPYGLQGILLAHVFFNLPMASRLLLQSLESIPGEQRQLAAQLGMRGWHFFRFVEWPWLRRQIPPVAALIFMLCFASFATVLSLGGGPQATTIELAIFQALSYDYDPARAAMLALIQMVCCLALVLLSQRLSKAIAPGMTLTQGWRDPDDRLHSRLTDALLIVLALLLLLPPLVAVVVDGVNRSLPEVLAQPILWQAVWTSLRIALAAGVLCVVLTMMLLWSSRELRQRQQLFAGQTLELSGMLILAMPGIVLATGFFLLLNNSVGLPESADGIVIFTNALMAIPYALKVLENPMRDITARYGMLCQSLGIEGWSRLKIVELRALKRPLAQALAFACVLSIGDFGVVALFGNDNFRTLPFYLYQQIGSYRSQDGAVTALILLLLCFTLFTLIEKLPGRHAKTD</sequence>
<feature type="chain" id="PRO_0000448617" description="Thiamine transport system permease protein ThiP">
    <location>
        <begin position="1"/>
        <end position="536"/>
    </location>
</feature>
<feature type="transmembrane region" description="Helical" evidence="2">
    <location>
        <begin position="16"/>
        <end position="36"/>
    </location>
</feature>
<feature type="transmembrane region" description="Helical" evidence="2">
    <location>
        <begin position="58"/>
        <end position="78"/>
    </location>
</feature>
<feature type="transmembrane region" description="Helical" evidence="2">
    <location>
        <begin position="95"/>
        <end position="115"/>
    </location>
</feature>
<feature type="transmembrane region" description="Helical" evidence="2">
    <location>
        <begin position="134"/>
        <end position="154"/>
    </location>
</feature>
<feature type="transmembrane region" description="Helical" evidence="2">
    <location>
        <begin position="199"/>
        <end position="219"/>
    </location>
</feature>
<feature type="transmembrane region" description="Helical" evidence="2">
    <location>
        <begin position="240"/>
        <end position="260"/>
    </location>
</feature>
<feature type="transmembrane region" description="Helical" evidence="2">
    <location>
        <begin position="291"/>
        <end position="311"/>
    </location>
</feature>
<feature type="transmembrane region" description="Helical" evidence="2">
    <location>
        <begin position="334"/>
        <end position="354"/>
    </location>
</feature>
<feature type="transmembrane region" description="Helical" evidence="2">
    <location>
        <begin position="373"/>
        <end position="393"/>
    </location>
</feature>
<feature type="transmembrane region" description="Helical" evidence="2">
    <location>
        <begin position="404"/>
        <end position="424"/>
    </location>
</feature>
<feature type="transmembrane region" description="Helical" evidence="2">
    <location>
        <begin position="463"/>
        <end position="483"/>
    </location>
</feature>
<feature type="transmembrane region" description="Helical" evidence="2">
    <location>
        <begin position="506"/>
        <end position="526"/>
    </location>
</feature>
<feature type="domain" description="ABC transmembrane type-1 1" evidence="3">
    <location>
        <begin position="56"/>
        <end position="261"/>
    </location>
</feature>
<feature type="domain" description="ABC transmembrane type-1 2" evidence="3">
    <location>
        <begin position="331"/>
        <end position="525"/>
    </location>
</feature>
<organism>
    <name type="scientific">Salmonella typhimurium (strain LT2 / SGSC1412 / ATCC 700720)</name>
    <dbReference type="NCBI Taxonomy" id="99287"/>
    <lineage>
        <taxon>Bacteria</taxon>
        <taxon>Pseudomonadati</taxon>
        <taxon>Pseudomonadota</taxon>
        <taxon>Gammaproteobacteria</taxon>
        <taxon>Enterobacterales</taxon>
        <taxon>Enterobacteriaceae</taxon>
        <taxon>Salmonella</taxon>
    </lineage>
</organism>
<keyword id="KW-0997">Cell inner membrane</keyword>
<keyword id="KW-1003">Cell membrane</keyword>
<keyword id="KW-0472">Membrane</keyword>
<keyword id="KW-1185">Reference proteome</keyword>
<keyword id="KW-0677">Repeat</keyword>
<keyword id="KW-0812">Transmembrane</keyword>
<keyword id="KW-1133">Transmembrane helix</keyword>
<keyword id="KW-0813">Transport</keyword>
<comment type="function">
    <text evidence="4 7">Part of the ABC transporter complex ThiBPQ involved in thiamine import (PubMed:9535878). Probably responsible for the translocation of the substrate across the membrane (Probable). Is also involved in thiamine pyrophosphate transport (PubMed:9535878).</text>
</comment>
<comment type="subunit">
    <text evidence="7">The complex is composed of two ATP-binding proteins (ThiQ), two transmembrane proteins (ThiP) and a solute-binding protein (ThiB).</text>
</comment>
<comment type="subcellular location">
    <subcellularLocation>
        <location evidence="1">Cell inner membrane</location>
        <topology evidence="2">Multi-pass membrane protein</topology>
    </subcellularLocation>
</comment>
<comment type="induction">
    <text evidence="4">Expression is repressed by thiamine.</text>
</comment>
<comment type="disruption phenotype">
    <text evidence="4">Insertions in thiBPQ cause a defect in the transport of both thiamine and TPP.</text>
</comment>
<comment type="similarity">
    <text evidence="6">Belongs to the binding-protein-dependent transport system permease family.</text>
</comment>
<protein>
    <recommendedName>
        <fullName evidence="6">Thiamine transport system permease protein ThiP</fullName>
    </recommendedName>
</protein>
<evidence type="ECO:0000250" key="1">
    <source>
        <dbReference type="UniProtKB" id="P31549"/>
    </source>
</evidence>
<evidence type="ECO:0000255" key="2"/>
<evidence type="ECO:0000255" key="3">
    <source>
        <dbReference type="PROSITE-ProRule" id="PRU00441"/>
    </source>
</evidence>
<evidence type="ECO:0000269" key="4">
    <source>
    </source>
</evidence>
<evidence type="ECO:0000303" key="5">
    <source>
    </source>
</evidence>
<evidence type="ECO:0000305" key="6"/>
<evidence type="ECO:0000305" key="7">
    <source>
    </source>
</evidence>
<evidence type="ECO:0000312" key="8">
    <source>
        <dbReference type="EMBL" id="AAL19071.1"/>
    </source>
</evidence>
<proteinExistence type="evidence at protein level"/>
<gene>
    <name evidence="5" type="primary">thiP</name>
    <name evidence="8" type="synonym">yabK</name>
    <name evidence="8" type="ordered locus">STM0107</name>
</gene>
<name>THIP_SALTY</name>
<dbReference type="EMBL" id="AE006468">
    <property type="protein sequence ID" value="AAL19071.1"/>
    <property type="molecule type" value="Genomic_DNA"/>
</dbReference>
<dbReference type="RefSeq" id="NP_459112.1">
    <property type="nucleotide sequence ID" value="NC_003197.2"/>
</dbReference>
<dbReference type="RefSeq" id="WP_000235634.1">
    <property type="nucleotide sequence ID" value="NC_003197.2"/>
</dbReference>
<dbReference type="SMR" id="Q8ZRV1"/>
<dbReference type="STRING" id="99287.STM0107"/>
<dbReference type="PaxDb" id="99287-STM0107"/>
<dbReference type="GeneID" id="1251625"/>
<dbReference type="KEGG" id="stm:STM0107"/>
<dbReference type="PATRIC" id="fig|99287.12.peg.110"/>
<dbReference type="HOGENOM" id="CLU_021838_5_3_6"/>
<dbReference type="OMA" id="SYLWHVI"/>
<dbReference type="PhylomeDB" id="Q8ZRV1"/>
<dbReference type="BioCyc" id="SENT99287:STM0107-MONOMER"/>
<dbReference type="Proteomes" id="UP000001014">
    <property type="component" value="Chromosome"/>
</dbReference>
<dbReference type="GO" id="GO:0005886">
    <property type="term" value="C:plasma membrane"/>
    <property type="evidence" value="ECO:0000318"/>
    <property type="project" value="GO_Central"/>
</dbReference>
<dbReference type="GO" id="GO:0022857">
    <property type="term" value="F:transmembrane transporter activity"/>
    <property type="evidence" value="ECO:0007669"/>
    <property type="project" value="InterPro"/>
</dbReference>
<dbReference type="GO" id="GO:0015888">
    <property type="term" value="P:thiamine transport"/>
    <property type="evidence" value="ECO:0007669"/>
    <property type="project" value="InterPro"/>
</dbReference>
<dbReference type="CDD" id="cd06261">
    <property type="entry name" value="TM_PBP2"/>
    <property type="match status" value="2"/>
</dbReference>
<dbReference type="FunFam" id="1.10.3720.10:FF:000044">
    <property type="entry name" value="Thiamine/thiamine pyrophosphate ABC transporter permease ThiP"/>
    <property type="match status" value="1"/>
</dbReference>
<dbReference type="FunFam" id="1.10.3720.10:FF:000048">
    <property type="entry name" value="Thiamine/thiamine pyrophosphate ABC transporter permease ThiP"/>
    <property type="match status" value="1"/>
</dbReference>
<dbReference type="Gene3D" id="1.10.3720.10">
    <property type="entry name" value="MetI-like"/>
    <property type="match status" value="2"/>
</dbReference>
<dbReference type="InterPro" id="IPR000515">
    <property type="entry name" value="MetI-like"/>
</dbReference>
<dbReference type="InterPro" id="IPR035906">
    <property type="entry name" value="MetI-like_sf"/>
</dbReference>
<dbReference type="InterPro" id="IPR005947">
    <property type="entry name" value="ThiP_ABC_transpt"/>
</dbReference>
<dbReference type="NCBIfam" id="NF006951">
    <property type="entry name" value="PRK09433.1-2"/>
    <property type="match status" value="1"/>
</dbReference>
<dbReference type="NCBIfam" id="NF006953">
    <property type="entry name" value="PRK09433.1-4"/>
    <property type="match status" value="1"/>
</dbReference>
<dbReference type="NCBIfam" id="TIGR01253">
    <property type="entry name" value="thiP"/>
    <property type="match status" value="1"/>
</dbReference>
<dbReference type="PANTHER" id="PTHR30183">
    <property type="entry name" value="MOLYBDENUM TRANSPORT SYSTEM PERMEASE PROTEIN MODB"/>
    <property type="match status" value="1"/>
</dbReference>
<dbReference type="PANTHER" id="PTHR30183:SF9">
    <property type="entry name" value="THIAMINE TRANSPORT SYSTEM PERMEASE PROTEIN THIP"/>
    <property type="match status" value="1"/>
</dbReference>
<dbReference type="Pfam" id="PF00528">
    <property type="entry name" value="BPD_transp_1"/>
    <property type="match status" value="1"/>
</dbReference>
<dbReference type="SUPFAM" id="SSF161098">
    <property type="entry name" value="MetI-like"/>
    <property type="match status" value="2"/>
</dbReference>
<dbReference type="PROSITE" id="PS50928">
    <property type="entry name" value="ABC_TM1"/>
    <property type="match status" value="2"/>
</dbReference>
<accession>Q8ZRV1</accession>
<reference key="1">
    <citation type="journal article" date="2001" name="Nature">
        <title>Complete genome sequence of Salmonella enterica serovar Typhimurium LT2.</title>
        <authorList>
            <person name="McClelland M."/>
            <person name="Sanderson K.E."/>
            <person name="Spieth J."/>
            <person name="Clifton S.W."/>
            <person name="Latreille P."/>
            <person name="Courtney L."/>
            <person name="Porwollik S."/>
            <person name="Ali J."/>
            <person name="Dante M."/>
            <person name="Du F."/>
            <person name="Hou S."/>
            <person name="Layman D."/>
            <person name="Leonard S."/>
            <person name="Nguyen C."/>
            <person name="Scott K."/>
            <person name="Holmes A."/>
            <person name="Grewal N."/>
            <person name="Mulvaney E."/>
            <person name="Ryan E."/>
            <person name="Sun H."/>
            <person name="Florea L."/>
            <person name="Miller W."/>
            <person name="Stoneking T."/>
            <person name="Nhan M."/>
            <person name="Waterston R."/>
            <person name="Wilson R.K."/>
        </authorList>
    </citation>
    <scope>NUCLEOTIDE SEQUENCE [LARGE SCALE GENOMIC DNA]</scope>
    <source>
        <strain>LT2 / SGSC1412 / ATCC 700720</strain>
    </source>
</reference>
<reference key="2">
    <citation type="journal article" date="1998" name="J. Biol. Chem.">
        <title>thiBPQ encodes an ABC transporter required for transport of thiamine and thiamine pyrophosphate in Salmonella typhimurium.</title>
        <authorList>
            <person name="Webb E."/>
            <person name="Claas K."/>
            <person name="Downs D."/>
        </authorList>
    </citation>
    <scope>FUNCTION IN THIAMINE AND THIAMINE PYROPHOSPHATE TRANSPORT</scope>
    <scope>SUBUNIT</scope>
    <scope>INDUCTION</scope>
    <scope>DISRUPTION PHENOTYPE</scope>
    <source>
        <strain>LT2</strain>
    </source>
</reference>